<dbReference type="EC" id="2.4.2.18" evidence="1"/>
<dbReference type="EMBL" id="CP000478">
    <property type="protein sequence ID" value="ABK17461.1"/>
    <property type="molecule type" value="Genomic_DNA"/>
</dbReference>
<dbReference type="RefSeq" id="WP_011698631.1">
    <property type="nucleotide sequence ID" value="NC_008554.1"/>
</dbReference>
<dbReference type="SMR" id="A0LJ59"/>
<dbReference type="FunCoup" id="A0LJ59">
    <property type="interactions" value="425"/>
</dbReference>
<dbReference type="STRING" id="335543.Sfum_1774"/>
<dbReference type="KEGG" id="sfu:Sfum_1774"/>
<dbReference type="eggNOG" id="COG0547">
    <property type="taxonomic scope" value="Bacteria"/>
</dbReference>
<dbReference type="HOGENOM" id="CLU_034315_2_1_7"/>
<dbReference type="InParanoid" id="A0LJ59"/>
<dbReference type="OrthoDB" id="9806430at2"/>
<dbReference type="UniPathway" id="UPA00035">
    <property type="reaction ID" value="UER00041"/>
</dbReference>
<dbReference type="Proteomes" id="UP000001784">
    <property type="component" value="Chromosome"/>
</dbReference>
<dbReference type="GO" id="GO:0005829">
    <property type="term" value="C:cytosol"/>
    <property type="evidence" value="ECO:0007669"/>
    <property type="project" value="TreeGrafter"/>
</dbReference>
<dbReference type="GO" id="GO:0004048">
    <property type="term" value="F:anthranilate phosphoribosyltransferase activity"/>
    <property type="evidence" value="ECO:0007669"/>
    <property type="project" value="UniProtKB-UniRule"/>
</dbReference>
<dbReference type="GO" id="GO:0000287">
    <property type="term" value="F:magnesium ion binding"/>
    <property type="evidence" value="ECO:0007669"/>
    <property type="project" value="UniProtKB-UniRule"/>
</dbReference>
<dbReference type="GO" id="GO:0000162">
    <property type="term" value="P:L-tryptophan biosynthetic process"/>
    <property type="evidence" value="ECO:0007669"/>
    <property type="project" value="UniProtKB-UniRule"/>
</dbReference>
<dbReference type="FunFam" id="3.40.1030.10:FF:000002">
    <property type="entry name" value="Anthranilate phosphoribosyltransferase"/>
    <property type="match status" value="1"/>
</dbReference>
<dbReference type="Gene3D" id="3.40.1030.10">
    <property type="entry name" value="Nucleoside phosphorylase/phosphoribosyltransferase catalytic domain"/>
    <property type="match status" value="1"/>
</dbReference>
<dbReference type="Gene3D" id="1.20.970.10">
    <property type="entry name" value="Transferase, Pyrimidine Nucleoside Phosphorylase, Chain C"/>
    <property type="match status" value="1"/>
</dbReference>
<dbReference type="HAMAP" id="MF_00211">
    <property type="entry name" value="TrpD"/>
    <property type="match status" value="1"/>
</dbReference>
<dbReference type="InterPro" id="IPR005940">
    <property type="entry name" value="Anthranilate_Pribosyl_Tfrase"/>
</dbReference>
<dbReference type="InterPro" id="IPR000312">
    <property type="entry name" value="Glycosyl_Trfase_fam3"/>
</dbReference>
<dbReference type="InterPro" id="IPR017459">
    <property type="entry name" value="Glycosyl_Trfase_fam3_N_dom"/>
</dbReference>
<dbReference type="InterPro" id="IPR036320">
    <property type="entry name" value="Glycosyl_Trfase_fam3_N_dom_sf"/>
</dbReference>
<dbReference type="InterPro" id="IPR035902">
    <property type="entry name" value="Nuc_phospho_transferase"/>
</dbReference>
<dbReference type="NCBIfam" id="TIGR01245">
    <property type="entry name" value="trpD"/>
    <property type="match status" value="1"/>
</dbReference>
<dbReference type="PANTHER" id="PTHR43285">
    <property type="entry name" value="ANTHRANILATE PHOSPHORIBOSYLTRANSFERASE"/>
    <property type="match status" value="1"/>
</dbReference>
<dbReference type="PANTHER" id="PTHR43285:SF2">
    <property type="entry name" value="ANTHRANILATE PHOSPHORIBOSYLTRANSFERASE"/>
    <property type="match status" value="1"/>
</dbReference>
<dbReference type="Pfam" id="PF02885">
    <property type="entry name" value="Glycos_trans_3N"/>
    <property type="match status" value="1"/>
</dbReference>
<dbReference type="Pfam" id="PF00591">
    <property type="entry name" value="Glycos_transf_3"/>
    <property type="match status" value="1"/>
</dbReference>
<dbReference type="SUPFAM" id="SSF52418">
    <property type="entry name" value="Nucleoside phosphorylase/phosphoribosyltransferase catalytic domain"/>
    <property type="match status" value="1"/>
</dbReference>
<dbReference type="SUPFAM" id="SSF47648">
    <property type="entry name" value="Nucleoside phosphorylase/phosphoribosyltransferase N-terminal domain"/>
    <property type="match status" value="1"/>
</dbReference>
<proteinExistence type="inferred from homology"/>
<gene>
    <name evidence="1" type="primary">trpD</name>
    <name type="ordered locus">Sfum_1774</name>
</gene>
<name>TRPD_SYNFM</name>
<protein>
    <recommendedName>
        <fullName evidence="1">Anthranilate phosphoribosyltransferase</fullName>
        <ecNumber evidence="1">2.4.2.18</ecNumber>
    </recommendedName>
</protein>
<keyword id="KW-0028">Amino-acid biosynthesis</keyword>
<keyword id="KW-0057">Aromatic amino acid biosynthesis</keyword>
<keyword id="KW-0328">Glycosyltransferase</keyword>
<keyword id="KW-0460">Magnesium</keyword>
<keyword id="KW-0479">Metal-binding</keyword>
<keyword id="KW-1185">Reference proteome</keyword>
<keyword id="KW-0808">Transferase</keyword>
<keyword id="KW-0822">Tryptophan biosynthesis</keyword>
<accession>A0LJ59</accession>
<sequence length="337" mass="35246">MIQDGIKKIIQREDLSETEMSAVMSEIMSGEATDAQIGAFMGALATKGETFEELAGAARTMRRKAARIQVTSPVIVDTCGTGGDRKGTFNISTTAAFVVAGCGVTVAKHGNRSVSSQCGSADLLEALGMRLDAPAEVVEEAIGRIGIGFLFAPLFHGAMRHAARARKEVGVRSIFNMLGPLTNPAGANCQVLGVYAPQLTEMFAQALRLLGARRAFVVHGQDGLDEISVCAPTRVSELDGGLVRTYDLQPELLLGRKADPEDLAGGDPGVNAKITRDVLGGAIGPRRDVVVLNAAAALIAAGAAEGFPSAVRNAEESIDGGKAIEKLEALVRYTNEN</sequence>
<feature type="chain" id="PRO_0000325474" description="Anthranilate phosphoribosyltransferase">
    <location>
        <begin position="1"/>
        <end position="337"/>
    </location>
</feature>
<feature type="binding site" evidence="1">
    <location>
        <position position="80"/>
    </location>
    <ligand>
        <name>5-phospho-alpha-D-ribose 1-diphosphate</name>
        <dbReference type="ChEBI" id="CHEBI:58017"/>
    </ligand>
</feature>
<feature type="binding site" evidence="1">
    <location>
        <position position="80"/>
    </location>
    <ligand>
        <name>anthranilate</name>
        <dbReference type="ChEBI" id="CHEBI:16567"/>
        <label>1</label>
    </ligand>
</feature>
<feature type="binding site" evidence="1">
    <location>
        <begin position="83"/>
        <end position="84"/>
    </location>
    <ligand>
        <name>5-phospho-alpha-D-ribose 1-diphosphate</name>
        <dbReference type="ChEBI" id="CHEBI:58017"/>
    </ligand>
</feature>
<feature type="binding site" evidence="1">
    <location>
        <position position="88"/>
    </location>
    <ligand>
        <name>5-phospho-alpha-D-ribose 1-diphosphate</name>
        <dbReference type="ChEBI" id="CHEBI:58017"/>
    </ligand>
</feature>
<feature type="binding site" evidence="1">
    <location>
        <begin position="90"/>
        <end position="93"/>
    </location>
    <ligand>
        <name>5-phospho-alpha-D-ribose 1-diphosphate</name>
        <dbReference type="ChEBI" id="CHEBI:58017"/>
    </ligand>
</feature>
<feature type="binding site" evidence="1">
    <location>
        <position position="92"/>
    </location>
    <ligand>
        <name>Mg(2+)</name>
        <dbReference type="ChEBI" id="CHEBI:18420"/>
        <label>1</label>
    </ligand>
</feature>
<feature type="binding site" evidence="1">
    <location>
        <begin position="108"/>
        <end position="116"/>
    </location>
    <ligand>
        <name>5-phospho-alpha-D-ribose 1-diphosphate</name>
        <dbReference type="ChEBI" id="CHEBI:58017"/>
    </ligand>
</feature>
<feature type="binding site" evidence="1">
    <location>
        <position position="111"/>
    </location>
    <ligand>
        <name>anthranilate</name>
        <dbReference type="ChEBI" id="CHEBI:16567"/>
        <label>1</label>
    </ligand>
</feature>
<feature type="binding site" evidence="1">
    <location>
        <position position="120"/>
    </location>
    <ligand>
        <name>5-phospho-alpha-D-ribose 1-diphosphate</name>
        <dbReference type="ChEBI" id="CHEBI:58017"/>
    </ligand>
</feature>
<feature type="binding site" evidence="1">
    <location>
        <position position="166"/>
    </location>
    <ligand>
        <name>anthranilate</name>
        <dbReference type="ChEBI" id="CHEBI:16567"/>
        <label>2</label>
    </ligand>
</feature>
<feature type="binding site" evidence="1">
    <location>
        <position position="225"/>
    </location>
    <ligand>
        <name>Mg(2+)</name>
        <dbReference type="ChEBI" id="CHEBI:18420"/>
        <label>2</label>
    </ligand>
</feature>
<feature type="binding site" evidence="1">
    <location>
        <position position="226"/>
    </location>
    <ligand>
        <name>Mg(2+)</name>
        <dbReference type="ChEBI" id="CHEBI:18420"/>
        <label>1</label>
    </ligand>
</feature>
<feature type="binding site" evidence="1">
    <location>
        <position position="226"/>
    </location>
    <ligand>
        <name>Mg(2+)</name>
        <dbReference type="ChEBI" id="CHEBI:18420"/>
        <label>2</label>
    </ligand>
</feature>
<evidence type="ECO:0000255" key="1">
    <source>
        <dbReference type="HAMAP-Rule" id="MF_00211"/>
    </source>
</evidence>
<organism>
    <name type="scientific">Syntrophobacter fumaroxidans (strain DSM 10017 / MPOB)</name>
    <dbReference type="NCBI Taxonomy" id="335543"/>
    <lineage>
        <taxon>Bacteria</taxon>
        <taxon>Pseudomonadati</taxon>
        <taxon>Thermodesulfobacteriota</taxon>
        <taxon>Syntrophobacteria</taxon>
        <taxon>Syntrophobacterales</taxon>
        <taxon>Syntrophobacteraceae</taxon>
        <taxon>Syntrophobacter</taxon>
    </lineage>
</organism>
<comment type="function">
    <text evidence="1">Catalyzes the transfer of the phosphoribosyl group of 5-phosphorylribose-1-pyrophosphate (PRPP) to anthranilate to yield N-(5'-phosphoribosyl)-anthranilate (PRA).</text>
</comment>
<comment type="catalytic activity">
    <reaction evidence="1">
        <text>N-(5-phospho-beta-D-ribosyl)anthranilate + diphosphate = 5-phospho-alpha-D-ribose 1-diphosphate + anthranilate</text>
        <dbReference type="Rhea" id="RHEA:11768"/>
        <dbReference type="ChEBI" id="CHEBI:16567"/>
        <dbReference type="ChEBI" id="CHEBI:18277"/>
        <dbReference type="ChEBI" id="CHEBI:33019"/>
        <dbReference type="ChEBI" id="CHEBI:58017"/>
        <dbReference type="EC" id="2.4.2.18"/>
    </reaction>
</comment>
<comment type="cofactor">
    <cofactor evidence="1">
        <name>Mg(2+)</name>
        <dbReference type="ChEBI" id="CHEBI:18420"/>
    </cofactor>
    <text evidence="1">Binds 2 magnesium ions per monomer.</text>
</comment>
<comment type="pathway">
    <text evidence="1">Amino-acid biosynthesis; L-tryptophan biosynthesis; L-tryptophan from chorismate: step 2/5.</text>
</comment>
<comment type="subunit">
    <text evidence="1">Homodimer.</text>
</comment>
<comment type="similarity">
    <text evidence="1">Belongs to the anthranilate phosphoribosyltransferase family.</text>
</comment>
<reference key="1">
    <citation type="submission" date="2006-10" db="EMBL/GenBank/DDBJ databases">
        <title>Complete sequence of Syntrophobacter fumaroxidans MPOB.</title>
        <authorList>
            <consortium name="US DOE Joint Genome Institute"/>
            <person name="Copeland A."/>
            <person name="Lucas S."/>
            <person name="Lapidus A."/>
            <person name="Barry K."/>
            <person name="Detter J.C."/>
            <person name="Glavina del Rio T."/>
            <person name="Hammon N."/>
            <person name="Israni S."/>
            <person name="Pitluck S."/>
            <person name="Goltsman E.G."/>
            <person name="Martinez M."/>
            <person name="Schmutz J."/>
            <person name="Larimer F."/>
            <person name="Land M."/>
            <person name="Hauser L."/>
            <person name="Kyrpides N."/>
            <person name="Kim E."/>
            <person name="Boone D.R."/>
            <person name="Brockman F."/>
            <person name="Culley D."/>
            <person name="Ferry J."/>
            <person name="Gunsalus R."/>
            <person name="McInerney M.J."/>
            <person name="Morrison M."/>
            <person name="Plugge C."/>
            <person name="Rohlin L."/>
            <person name="Scholten J."/>
            <person name="Sieber J."/>
            <person name="Stams A.J.M."/>
            <person name="Worm P."/>
            <person name="Henstra A.M."/>
            <person name="Richardson P."/>
        </authorList>
    </citation>
    <scope>NUCLEOTIDE SEQUENCE [LARGE SCALE GENOMIC DNA]</scope>
    <source>
        <strain>DSM 10017 / MPOB</strain>
    </source>
</reference>